<name>RSMG_HAEI8</name>
<reference key="1">
    <citation type="journal article" date="2005" name="J. Bacteriol.">
        <title>Genomic sequence of an otitis media isolate of nontypeable Haemophilus influenzae: comparative study with H. influenzae serotype d, strain KW20.</title>
        <authorList>
            <person name="Harrison A."/>
            <person name="Dyer D.W."/>
            <person name="Gillaspy A."/>
            <person name="Ray W.C."/>
            <person name="Mungur R."/>
            <person name="Carson M.B."/>
            <person name="Zhong H."/>
            <person name="Gipson J."/>
            <person name="Gipson M."/>
            <person name="Johnson L.S."/>
            <person name="Lewis L."/>
            <person name="Bakaletz L.O."/>
            <person name="Munson R.S. Jr."/>
        </authorList>
    </citation>
    <scope>NUCLEOTIDE SEQUENCE [LARGE SCALE GENOMIC DNA]</scope>
    <source>
        <strain>86-028NP</strain>
    </source>
</reference>
<evidence type="ECO:0000255" key="1">
    <source>
        <dbReference type="HAMAP-Rule" id="MF_00074"/>
    </source>
</evidence>
<organism>
    <name type="scientific">Haemophilus influenzae (strain 86-028NP)</name>
    <dbReference type="NCBI Taxonomy" id="281310"/>
    <lineage>
        <taxon>Bacteria</taxon>
        <taxon>Pseudomonadati</taxon>
        <taxon>Pseudomonadota</taxon>
        <taxon>Gammaproteobacteria</taxon>
        <taxon>Pasteurellales</taxon>
        <taxon>Pasteurellaceae</taxon>
        <taxon>Haemophilus</taxon>
    </lineage>
</organism>
<accession>Q4QN56</accession>
<proteinExistence type="inferred from homology"/>
<sequence length="203" mass="23178">MKAKLVSLLAQANIKISDQQIQQLINLVNLLNKWNKAYNLTSVRDPQEMLVKHILDSLVVSPYLQGDRFIDVGTGPGLPGLPLAIINPSKQFVLLDSLGKRISFIRNAIRELRLTNVTPVLSRVEEYQPEDKFDGVLSRAFASLKDMTDWCHHLPKENGYFYALKGIYQEDEINELNKKYTIQKVIELSVPELIGERHLIVLR</sequence>
<feature type="chain" id="PRO_0000184260" description="Ribosomal RNA small subunit methyltransferase G">
    <location>
        <begin position="1"/>
        <end position="203"/>
    </location>
</feature>
<feature type="binding site" evidence="1">
    <location>
        <position position="73"/>
    </location>
    <ligand>
        <name>S-adenosyl-L-methionine</name>
        <dbReference type="ChEBI" id="CHEBI:59789"/>
    </ligand>
</feature>
<feature type="binding site" evidence="1">
    <location>
        <position position="78"/>
    </location>
    <ligand>
        <name>S-adenosyl-L-methionine</name>
        <dbReference type="ChEBI" id="CHEBI:59789"/>
    </ligand>
</feature>
<feature type="binding site" evidence="1">
    <location>
        <begin position="124"/>
        <end position="125"/>
    </location>
    <ligand>
        <name>S-adenosyl-L-methionine</name>
        <dbReference type="ChEBI" id="CHEBI:59789"/>
    </ligand>
</feature>
<feature type="binding site" evidence="1">
    <location>
        <position position="139"/>
    </location>
    <ligand>
        <name>S-adenosyl-L-methionine</name>
        <dbReference type="ChEBI" id="CHEBI:59789"/>
    </ligand>
</feature>
<dbReference type="EC" id="2.1.1.170" evidence="1"/>
<dbReference type="EMBL" id="CP000057">
    <property type="protein sequence ID" value="AAX87541.1"/>
    <property type="molecule type" value="Genomic_DNA"/>
</dbReference>
<dbReference type="RefSeq" id="WP_005652031.1">
    <property type="nucleotide sequence ID" value="NC_007146.2"/>
</dbReference>
<dbReference type="SMR" id="Q4QN56"/>
<dbReference type="GeneID" id="93219500"/>
<dbReference type="KEGG" id="hit:NTHI0617"/>
<dbReference type="HOGENOM" id="CLU_065341_2_2_6"/>
<dbReference type="Proteomes" id="UP000002525">
    <property type="component" value="Chromosome"/>
</dbReference>
<dbReference type="GO" id="GO:0005829">
    <property type="term" value="C:cytosol"/>
    <property type="evidence" value="ECO:0007669"/>
    <property type="project" value="TreeGrafter"/>
</dbReference>
<dbReference type="GO" id="GO:0070043">
    <property type="term" value="F:rRNA (guanine-N7-)-methyltransferase activity"/>
    <property type="evidence" value="ECO:0007669"/>
    <property type="project" value="UniProtKB-UniRule"/>
</dbReference>
<dbReference type="CDD" id="cd02440">
    <property type="entry name" value="AdoMet_MTases"/>
    <property type="match status" value="1"/>
</dbReference>
<dbReference type="FunFam" id="3.40.50.150:FF:000032">
    <property type="entry name" value="Ribosomal RNA small subunit methyltransferase G"/>
    <property type="match status" value="1"/>
</dbReference>
<dbReference type="Gene3D" id="3.40.50.150">
    <property type="entry name" value="Vaccinia Virus protein VP39"/>
    <property type="match status" value="1"/>
</dbReference>
<dbReference type="HAMAP" id="MF_00074">
    <property type="entry name" value="16SrRNA_methyltr_G"/>
    <property type="match status" value="1"/>
</dbReference>
<dbReference type="InterPro" id="IPR003682">
    <property type="entry name" value="rRNA_ssu_MeTfrase_G"/>
</dbReference>
<dbReference type="InterPro" id="IPR029063">
    <property type="entry name" value="SAM-dependent_MTases_sf"/>
</dbReference>
<dbReference type="NCBIfam" id="TIGR00138">
    <property type="entry name" value="rsmG_gidB"/>
    <property type="match status" value="1"/>
</dbReference>
<dbReference type="PANTHER" id="PTHR31760">
    <property type="entry name" value="S-ADENOSYL-L-METHIONINE-DEPENDENT METHYLTRANSFERASES SUPERFAMILY PROTEIN"/>
    <property type="match status" value="1"/>
</dbReference>
<dbReference type="PANTHER" id="PTHR31760:SF0">
    <property type="entry name" value="S-ADENOSYL-L-METHIONINE-DEPENDENT METHYLTRANSFERASES SUPERFAMILY PROTEIN"/>
    <property type="match status" value="1"/>
</dbReference>
<dbReference type="Pfam" id="PF02527">
    <property type="entry name" value="GidB"/>
    <property type="match status" value="1"/>
</dbReference>
<dbReference type="PIRSF" id="PIRSF003078">
    <property type="entry name" value="GidB"/>
    <property type="match status" value="1"/>
</dbReference>
<dbReference type="SUPFAM" id="SSF53335">
    <property type="entry name" value="S-adenosyl-L-methionine-dependent methyltransferases"/>
    <property type="match status" value="1"/>
</dbReference>
<comment type="function">
    <text evidence="1">Specifically methylates the N7 position of guanine in position 527 of 16S rRNA.</text>
</comment>
<comment type="catalytic activity">
    <reaction evidence="1">
        <text>guanosine(527) in 16S rRNA + S-adenosyl-L-methionine = N(7)-methylguanosine(527) in 16S rRNA + S-adenosyl-L-homocysteine</text>
        <dbReference type="Rhea" id="RHEA:42732"/>
        <dbReference type="Rhea" id="RHEA-COMP:10209"/>
        <dbReference type="Rhea" id="RHEA-COMP:10210"/>
        <dbReference type="ChEBI" id="CHEBI:57856"/>
        <dbReference type="ChEBI" id="CHEBI:59789"/>
        <dbReference type="ChEBI" id="CHEBI:74269"/>
        <dbReference type="ChEBI" id="CHEBI:74480"/>
        <dbReference type="EC" id="2.1.1.170"/>
    </reaction>
</comment>
<comment type="subcellular location">
    <subcellularLocation>
        <location evidence="1">Cytoplasm</location>
    </subcellularLocation>
</comment>
<comment type="similarity">
    <text evidence="1">Belongs to the methyltransferase superfamily. RNA methyltransferase RsmG family.</text>
</comment>
<protein>
    <recommendedName>
        <fullName evidence="1">Ribosomal RNA small subunit methyltransferase G</fullName>
        <ecNumber evidence="1">2.1.1.170</ecNumber>
    </recommendedName>
    <alternativeName>
        <fullName evidence="1">16S rRNA 7-methylguanosine methyltransferase</fullName>
        <shortName evidence="1">16S rRNA m7G methyltransferase</shortName>
    </alternativeName>
</protein>
<gene>
    <name evidence="1" type="primary">rsmG</name>
    <name type="ordered locus">NTHI0617</name>
</gene>
<keyword id="KW-0963">Cytoplasm</keyword>
<keyword id="KW-0489">Methyltransferase</keyword>
<keyword id="KW-0698">rRNA processing</keyword>
<keyword id="KW-0949">S-adenosyl-L-methionine</keyword>
<keyword id="KW-0808">Transferase</keyword>